<feature type="chain" id="PRO_0000067647" description="Urease accessory protein UreF">
    <location>
        <begin position="1"/>
        <end position="235"/>
    </location>
</feature>
<dbReference type="EMBL" id="L42023">
    <property type="protein sequence ID" value="AAC22195.1"/>
    <property type="status" value="ALT_INIT"/>
    <property type="molecule type" value="Genomic_DNA"/>
</dbReference>
<dbReference type="PIR" id="F64075">
    <property type="entry name" value="F64075"/>
</dbReference>
<dbReference type="RefSeq" id="NP_438695.2">
    <property type="nucleotide sequence ID" value="NC_000907.1"/>
</dbReference>
<dbReference type="SMR" id="P44395"/>
<dbReference type="STRING" id="71421.HI_0537"/>
<dbReference type="EnsemblBacteria" id="AAC22195">
    <property type="protein sequence ID" value="AAC22195"/>
    <property type="gene ID" value="HI_0537"/>
</dbReference>
<dbReference type="KEGG" id="hin:HI_0537"/>
<dbReference type="PATRIC" id="fig|71421.8.peg.556"/>
<dbReference type="eggNOG" id="COG0830">
    <property type="taxonomic scope" value="Bacteria"/>
</dbReference>
<dbReference type="HOGENOM" id="CLU_049215_4_1_6"/>
<dbReference type="OrthoDB" id="9798772at2"/>
<dbReference type="PhylomeDB" id="P44395"/>
<dbReference type="BioCyc" id="HINF71421:G1GJ1-550-MONOMER"/>
<dbReference type="Proteomes" id="UP000000579">
    <property type="component" value="Chromosome"/>
</dbReference>
<dbReference type="GO" id="GO:0005737">
    <property type="term" value="C:cytoplasm"/>
    <property type="evidence" value="ECO:0007669"/>
    <property type="project" value="UniProtKB-SubCell"/>
</dbReference>
<dbReference type="GO" id="GO:0016151">
    <property type="term" value="F:nickel cation binding"/>
    <property type="evidence" value="ECO:0007669"/>
    <property type="project" value="UniProtKB-UniRule"/>
</dbReference>
<dbReference type="Gene3D" id="1.10.4190.10">
    <property type="entry name" value="Urease accessory protein UreF"/>
    <property type="match status" value="1"/>
</dbReference>
<dbReference type="HAMAP" id="MF_01385">
    <property type="entry name" value="UreF"/>
    <property type="match status" value="1"/>
</dbReference>
<dbReference type="InterPro" id="IPR002639">
    <property type="entry name" value="UreF"/>
</dbReference>
<dbReference type="InterPro" id="IPR038277">
    <property type="entry name" value="UreF_sf"/>
</dbReference>
<dbReference type="PANTHER" id="PTHR33620">
    <property type="entry name" value="UREASE ACCESSORY PROTEIN F"/>
    <property type="match status" value="1"/>
</dbReference>
<dbReference type="PANTHER" id="PTHR33620:SF1">
    <property type="entry name" value="UREASE ACCESSORY PROTEIN F"/>
    <property type="match status" value="1"/>
</dbReference>
<dbReference type="Pfam" id="PF01730">
    <property type="entry name" value="UreF"/>
    <property type="match status" value="1"/>
</dbReference>
<dbReference type="PIRSF" id="PIRSF009467">
    <property type="entry name" value="Ureas_acces_UreF"/>
    <property type="match status" value="1"/>
</dbReference>
<gene>
    <name evidence="1" type="primary">ureF</name>
    <name type="ordered locus">HI_0537</name>
</gene>
<organism>
    <name type="scientific">Haemophilus influenzae (strain ATCC 51907 / DSM 11121 / KW20 / Rd)</name>
    <dbReference type="NCBI Taxonomy" id="71421"/>
    <lineage>
        <taxon>Bacteria</taxon>
        <taxon>Pseudomonadati</taxon>
        <taxon>Pseudomonadota</taxon>
        <taxon>Gammaproteobacteria</taxon>
        <taxon>Pasteurellales</taxon>
        <taxon>Pasteurellaceae</taxon>
        <taxon>Haemophilus</taxon>
    </lineage>
</organism>
<name>UREF_HAEIN</name>
<keyword id="KW-0143">Chaperone</keyword>
<keyword id="KW-0963">Cytoplasm</keyword>
<keyword id="KW-0996">Nickel insertion</keyword>
<keyword id="KW-1185">Reference proteome</keyword>
<protein>
    <recommendedName>
        <fullName evidence="1">Urease accessory protein UreF</fullName>
    </recommendedName>
</protein>
<evidence type="ECO:0000255" key="1">
    <source>
        <dbReference type="HAMAP-Rule" id="MF_01385"/>
    </source>
</evidence>
<evidence type="ECO:0000305" key="2"/>
<accession>P44395</accession>
<sequence>MAQTLNRSLTDLGALLHLVDPTLPIGGFNHSNGLETFVQQRVVESKATLEEYVQTQLLQNWIYNDGAYLSLAFDAMCEGNFDRLCELDWQLSATKVARESREGSFKLGVRLLKIFIRYETHTLLTAYQQAIAEKRVQGYFPIVFAMVAQAMGLSKADTLYAFYYNAAVGVITNGVKLIPLSQMDGQDILFDLRGSLVQAVELSLDPDEEWLGAATLANDIRAMQHEVLYTRLYMS</sequence>
<proteinExistence type="inferred from homology"/>
<reference key="1">
    <citation type="journal article" date="1995" name="Science">
        <title>Whole-genome random sequencing and assembly of Haemophilus influenzae Rd.</title>
        <authorList>
            <person name="Fleischmann R.D."/>
            <person name="Adams M.D."/>
            <person name="White O."/>
            <person name="Clayton R.A."/>
            <person name="Kirkness E.F."/>
            <person name="Kerlavage A.R."/>
            <person name="Bult C.J."/>
            <person name="Tomb J.-F."/>
            <person name="Dougherty B.A."/>
            <person name="Merrick J.M."/>
            <person name="McKenney K."/>
            <person name="Sutton G.G."/>
            <person name="FitzHugh W."/>
            <person name="Fields C.A."/>
            <person name="Gocayne J.D."/>
            <person name="Scott J.D."/>
            <person name="Shirley R."/>
            <person name="Liu L.-I."/>
            <person name="Glodek A."/>
            <person name="Kelley J.M."/>
            <person name="Weidman J.F."/>
            <person name="Phillips C.A."/>
            <person name="Spriggs T."/>
            <person name="Hedblom E."/>
            <person name="Cotton M.D."/>
            <person name="Utterback T.R."/>
            <person name="Hanna M.C."/>
            <person name="Nguyen D.T."/>
            <person name="Saudek D.M."/>
            <person name="Brandon R.C."/>
            <person name="Fine L.D."/>
            <person name="Fritchman J.L."/>
            <person name="Fuhrmann J.L."/>
            <person name="Geoghagen N.S.M."/>
            <person name="Gnehm C.L."/>
            <person name="McDonald L.A."/>
            <person name="Small K.V."/>
            <person name="Fraser C.M."/>
            <person name="Smith H.O."/>
            <person name="Venter J.C."/>
        </authorList>
    </citation>
    <scope>NUCLEOTIDE SEQUENCE [LARGE SCALE GENOMIC DNA]</scope>
    <source>
        <strain>ATCC 51907 / DSM 11121 / KW20 / Rd</strain>
    </source>
</reference>
<comment type="function">
    <text evidence="1">Required for maturation of urease via the functional incorporation of the urease nickel metallocenter.</text>
</comment>
<comment type="subunit">
    <text evidence="1">UreD, UreF and UreG form a complex that acts as a GTP-hydrolysis-dependent molecular chaperone, activating the urease apoprotein by helping to assemble the nickel containing metallocenter of UreC. The UreE protein probably delivers the nickel.</text>
</comment>
<comment type="subcellular location">
    <subcellularLocation>
        <location evidence="1">Cytoplasm</location>
    </subcellularLocation>
</comment>
<comment type="similarity">
    <text evidence="1">Belongs to the UreF family.</text>
</comment>
<comment type="sequence caution" evidence="2">
    <conflict type="erroneous initiation">
        <sequence resource="EMBL-CDS" id="AAC22195"/>
    </conflict>
</comment>